<evidence type="ECO:0000250" key="1"/>
<evidence type="ECO:0000255" key="2">
    <source>
        <dbReference type="PROSITE-ProRule" id="PRU00102"/>
    </source>
</evidence>
<evidence type="ECO:0000255" key="3">
    <source>
        <dbReference type="PROSITE-ProRule" id="PRU00107"/>
    </source>
</evidence>
<evidence type="ECO:0000305" key="4"/>
<organism>
    <name type="scientific">Escherichia coli O6:H1 (strain CFT073 / ATCC 700928 / UPEC)</name>
    <dbReference type="NCBI Taxonomy" id="199310"/>
    <lineage>
        <taxon>Bacteria</taxon>
        <taxon>Pseudomonadati</taxon>
        <taxon>Pseudomonadota</taxon>
        <taxon>Gammaproteobacteria</taxon>
        <taxon>Enterobacterales</taxon>
        <taxon>Enterobacteriaceae</taxon>
        <taxon>Escherichia</taxon>
    </lineage>
</organism>
<dbReference type="EC" id="2.7.13.3"/>
<dbReference type="EMBL" id="AE014075">
    <property type="protein sequence ID" value="AAN83291.1"/>
    <property type="molecule type" value="Genomic_DNA"/>
</dbReference>
<dbReference type="RefSeq" id="WP_000580417.1">
    <property type="nucleotide sequence ID" value="NZ_CP051263.1"/>
</dbReference>
<dbReference type="SMR" id="P0AE83"/>
<dbReference type="STRING" id="199310.c4863"/>
<dbReference type="GeneID" id="93778027"/>
<dbReference type="KEGG" id="ecc:c4863"/>
<dbReference type="eggNOG" id="COG2205">
    <property type="taxonomic scope" value="Bacteria"/>
</dbReference>
<dbReference type="HOGENOM" id="CLU_000445_89_27_6"/>
<dbReference type="BioCyc" id="ECOL199310:C4863-MONOMER"/>
<dbReference type="BRENDA" id="2.7.13.3">
    <property type="organism ID" value="2026"/>
</dbReference>
<dbReference type="Proteomes" id="UP000001410">
    <property type="component" value="Chromosome"/>
</dbReference>
<dbReference type="GO" id="GO:0005886">
    <property type="term" value="C:plasma membrane"/>
    <property type="evidence" value="ECO:0007669"/>
    <property type="project" value="UniProtKB-SubCell"/>
</dbReference>
<dbReference type="GO" id="GO:0005524">
    <property type="term" value="F:ATP binding"/>
    <property type="evidence" value="ECO:0007669"/>
    <property type="project" value="UniProtKB-KW"/>
</dbReference>
<dbReference type="GO" id="GO:0000155">
    <property type="term" value="F:phosphorelay sensor kinase activity"/>
    <property type="evidence" value="ECO:0007669"/>
    <property type="project" value="InterPro"/>
</dbReference>
<dbReference type="CDD" id="cd06225">
    <property type="entry name" value="HAMP"/>
    <property type="match status" value="1"/>
</dbReference>
<dbReference type="CDD" id="cd16949">
    <property type="entry name" value="HATPase_CpxA-like"/>
    <property type="match status" value="1"/>
</dbReference>
<dbReference type="CDD" id="cd00082">
    <property type="entry name" value="HisKA"/>
    <property type="match status" value="1"/>
</dbReference>
<dbReference type="FunFam" id="1.10.287.130:FF:000007">
    <property type="entry name" value="Sensor histidine kinase CpxA"/>
    <property type="match status" value="1"/>
</dbReference>
<dbReference type="FunFam" id="3.30.450.210:FF:000001">
    <property type="entry name" value="Sensor histidine kinase CpxA"/>
    <property type="match status" value="1"/>
</dbReference>
<dbReference type="FunFam" id="3.30.565.10:FF:000011">
    <property type="entry name" value="Sensor histidine kinase CpxA"/>
    <property type="match status" value="1"/>
</dbReference>
<dbReference type="Gene3D" id="1.10.287.130">
    <property type="match status" value="1"/>
</dbReference>
<dbReference type="Gene3D" id="3.30.565.10">
    <property type="entry name" value="Histidine kinase-like ATPase, C-terminal domain"/>
    <property type="match status" value="1"/>
</dbReference>
<dbReference type="Gene3D" id="3.30.450.210">
    <property type="entry name" value="Two-component sensor protein CpxA, periplasmic domain"/>
    <property type="match status" value="1"/>
</dbReference>
<dbReference type="InterPro" id="IPR050398">
    <property type="entry name" value="Bact_Sensor_His_Kinase"/>
</dbReference>
<dbReference type="InterPro" id="IPR032404">
    <property type="entry name" value="CpxA_peri"/>
</dbReference>
<dbReference type="InterPro" id="IPR038515">
    <property type="entry name" value="CpxA_peri_sf"/>
</dbReference>
<dbReference type="InterPro" id="IPR003660">
    <property type="entry name" value="HAMP_dom"/>
</dbReference>
<dbReference type="InterPro" id="IPR036890">
    <property type="entry name" value="HATPase_C_sf"/>
</dbReference>
<dbReference type="InterPro" id="IPR005467">
    <property type="entry name" value="His_kinase_dom"/>
</dbReference>
<dbReference type="InterPro" id="IPR003661">
    <property type="entry name" value="HisK_dim/P_dom"/>
</dbReference>
<dbReference type="InterPro" id="IPR036097">
    <property type="entry name" value="HisK_dim/P_sf"/>
</dbReference>
<dbReference type="InterPro" id="IPR004358">
    <property type="entry name" value="Sig_transdc_His_kin-like_C"/>
</dbReference>
<dbReference type="NCBIfam" id="NF007007">
    <property type="entry name" value="PRK09470.1"/>
    <property type="match status" value="1"/>
</dbReference>
<dbReference type="PANTHER" id="PTHR45528">
    <property type="entry name" value="SENSOR HISTIDINE KINASE CPXA"/>
    <property type="match status" value="1"/>
</dbReference>
<dbReference type="PANTHER" id="PTHR45528:SF1">
    <property type="entry name" value="SENSOR HISTIDINE KINASE CPXA"/>
    <property type="match status" value="1"/>
</dbReference>
<dbReference type="Pfam" id="PF16527">
    <property type="entry name" value="CpxA_peri"/>
    <property type="match status" value="1"/>
</dbReference>
<dbReference type="Pfam" id="PF00672">
    <property type="entry name" value="HAMP"/>
    <property type="match status" value="1"/>
</dbReference>
<dbReference type="Pfam" id="PF02518">
    <property type="entry name" value="HATPase_c"/>
    <property type="match status" value="1"/>
</dbReference>
<dbReference type="Pfam" id="PF00512">
    <property type="entry name" value="HisKA"/>
    <property type="match status" value="1"/>
</dbReference>
<dbReference type="PRINTS" id="PR00344">
    <property type="entry name" value="BCTRLSENSOR"/>
</dbReference>
<dbReference type="SMART" id="SM00304">
    <property type="entry name" value="HAMP"/>
    <property type="match status" value="1"/>
</dbReference>
<dbReference type="SMART" id="SM00387">
    <property type="entry name" value="HATPase_c"/>
    <property type="match status" value="1"/>
</dbReference>
<dbReference type="SMART" id="SM00388">
    <property type="entry name" value="HisKA"/>
    <property type="match status" value="1"/>
</dbReference>
<dbReference type="SUPFAM" id="SSF55874">
    <property type="entry name" value="ATPase domain of HSP90 chaperone/DNA topoisomerase II/histidine kinase"/>
    <property type="match status" value="1"/>
</dbReference>
<dbReference type="SUPFAM" id="SSF47384">
    <property type="entry name" value="Homodimeric domain of signal transducing histidine kinase"/>
    <property type="match status" value="1"/>
</dbReference>
<dbReference type="PROSITE" id="PS50885">
    <property type="entry name" value="HAMP"/>
    <property type="match status" value="1"/>
</dbReference>
<dbReference type="PROSITE" id="PS50109">
    <property type="entry name" value="HIS_KIN"/>
    <property type="match status" value="1"/>
</dbReference>
<gene>
    <name type="primary">cpxA</name>
    <name type="ordered locus">c4863</name>
</gene>
<proteinExistence type="inferred from homology"/>
<keyword id="KW-0067">ATP-binding</keyword>
<keyword id="KW-0997">Cell inner membrane</keyword>
<keyword id="KW-1003">Cell membrane</keyword>
<keyword id="KW-0418">Kinase</keyword>
<keyword id="KW-0472">Membrane</keyword>
<keyword id="KW-0547">Nucleotide-binding</keyword>
<keyword id="KW-0597">Phosphoprotein</keyword>
<keyword id="KW-1185">Reference proteome</keyword>
<keyword id="KW-0808">Transferase</keyword>
<keyword id="KW-0812">Transmembrane</keyword>
<keyword id="KW-1133">Transmembrane helix</keyword>
<keyword id="KW-0902">Two-component regulatory system</keyword>
<name>CPXA_ECOL6</name>
<feature type="chain" id="PRO_0000074741" description="Sensor protein CpxA">
    <location>
        <begin position="1"/>
        <end position="457"/>
    </location>
</feature>
<feature type="topological domain" description="Cytoplasmic" evidence="4">
    <location>
        <begin position="1"/>
        <end position="7"/>
    </location>
</feature>
<feature type="transmembrane region" description="Helical" evidence="4">
    <location>
        <begin position="8"/>
        <end position="29"/>
    </location>
</feature>
<feature type="topological domain" description="Periplasmic" evidence="4">
    <location>
        <begin position="30"/>
        <end position="163"/>
    </location>
</feature>
<feature type="transmembrane region" description="Helical" evidence="4">
    <location>
        <begin position="164"/>
        <end position="184"/>
    </location>
</feature>
<feature type="topological domain" description="Cytoplasmic" evidence="4">
    <location>
        <begin position="185"/>
        <end position="457"/>
    </location>
</feature>
<feature type="domain" description="HAMP" evidence="2">
    <location>
        <begin position="185"/>
        <end position="237"/>
    </location>
</feature>
<feature type="domain" description="Histidine kinase" evidence="3">
    <location>
        <begin position="245"/>
        <end position="455"/>
    </location>
</feature>
<feature type="modified residue" description="Phosphohistidine; by autocatalysis" evidence="3">
    <location>
        <position position="248"/>
    </location>
</feature>
<sequence length="457" mass="51624">MIGSLTARIFAIFWLTLALVLMLVLMLPKLDSRQMTELLDSEQRQGLMIEQHVEAELANDPPNDLMWWRRLFRAIDKWAPPGQRLLLVTTEGRVIGAERSEMQIIRNFIGQADNADHPQKKKYGRVELVGPFSVRDGEDNYQLYLIRPASSSQSDFINLLFDRPLLLLIVTMLVSTPLLLWLAWSLAKPARKLKNAADEVAQGNLRQHPELEAGPQEFLAAGASFNQMVTALERMMTSQQRLLSDISHELRTPLTRLQLGTALLRRRSGESKELERIETEAQRLDSMINDLLVMSRNQQKNALVSETIKANQLWSEVLDNAAFEAEQMGKSLTVNFPPGPWPLYGNPNALESALENIVRNALRYSHTKIEVGFAVDKDGITITVDDDGPGVSPEDREQIFRPFYRTDEARDRESGGTGLGLAIVETAIQQHRGWVKAEDSPLGGLRLVIWLPLYKRS</sequence>
<protein>
    <recommendedName>
        <fullName>Sensor protein CpxA</fullName>
        <ecNumber>2.7.13.3</ecNumber>
    </recommendedName>
</protein>
<comment type="function">
    <text evidence="1">This protein is involved in several diverse cellular processes, such as the functioning of acetohydroxyacid synthetase I, in the biosynthesis of isoleucine and valine, the TraJ protein activation activity for tra gene expression in F plasmid, and the synthesis, translocation, or stability of cell envelope proteins. Activates CpxR by phosphorylation (By similarity).</text>
</comment>
<comment type="catalytic activity">
    <reaction>
        <text>ATP + protein L-histidine = ADP + protein N-phospho-L-histidine.</text>
        <dbReference type="EC" id="2.7.13.3"/>
    </reaction>
</comment>
<comment type="subcellular location">
    <subcellularLocation>
        <location evidence="1">Cell inner membrane</location>
        <topology evidence="1">Multi-pass membrane protein</topology>
    </subcellularLocation>
</comment>
<accession>P0AE83</accession>
<accession>P08336</accession>
<reference key="1">
    <citation type="journal article" date="2002" name="Proc. Natl. Acad. Sci. U.S.A.">
        <title>Extensive mosaic structure revealed by the complete genome sequence of uropathogenic Escherichia coli.</title>
        <authorList>
            <person name="Welch R.A."/>
            <person name="Burland V."/>
            <person name="Plunkett G. III"/>
            <person name="Redford P."/>
            <person name="Roesch P."/>
            <person name="Rasko D."/>
            <person name="Buckles E.L."/>
            <person name="Liou S.-R."/>
            <person name="Boutin A."/>
            <person name="Hackett J."/>
            <person name="Stroud D."/>
            <person name="Mayhew G.F."/>
            <person name="Rose D.J."/>
            <person name="Zhou S."/>
            <person name="Schwartz D.C."/>
            <person name="Perna N.T."/>
            <person name="Mobley H.L.T."/>
            <person name="Donnenberg M.S."/>
            <person name="Blattner F.R."/>
        </authorList>
    </citation>
    <scope>NUCLEOTIDE SEQUENCE [LARGE SCALE GENOMIC DNA]</scope>
    <source>
        <strain>CFT073 / ATCC 700928 / UPEC</strain>
    </source>
</reference>